<proteinExistence type="inferred from homology"/>
<protein>
    <recommendedName>
        <fullName evidence="4">Decarboxylase tropJ</fullName>
        <ecNumber evidence="2">1.-.-.-</ecNumber>
    </recommendedName>
    <alternativeName>
        <fullName evidence="5">Tropolone synthesis protein J</fullName>
    </alternativeName>
</protein>
<accession>B8M9J5</accession>
<keyword id="KW-0479">Metal-binding</keyword>
<keyword id="KW-0560">Oxidoreductase</keyword>
<keyword id="KW-1185">Reference proteome</keyword>
<keyword id="KW-0862">Zinc</keyword>
<comment type="function">
    <text evidence="2 3">Decarboxylase; part of the gene cluster that mediates the biosynthesis of the tropolone class of fungal maleic anhydrides (PubMed:22508998, PubMed:24863423). The pathway begins with the synthesis of 3-methylorcinaldehyde by the non-reducing polyketide synthase (PKS) tropA (PubMed:22508998). 3-methylorcinaldehyde is the substrate for the FAD-dependent monooxygenase tropB to yield a dearomatized hydroxycyclohexadione (PubMed:22508998, PubMed:24863423). The 2-oxoglutarate-dependent dioxygenase tropC then performs the oxidative ring expansion to provide the first tropolone metabolite stipitaldehyde (PubMed:22508998, PubMed:24863423). Trop D converts stipitaldehyde into stipitacetal which is in turn converted to stipitalide by the short-chain dehydrogenase/reductase tropE (PubMed:24863423). The next steps involve tropF, tropG, tropH, tropI and tropJ to form successive tropolone maleic anhydrides including stipitaldehydic, stipitatonic and stipitatic acids (PubMed:24863423).</text>
</comment>
<comment type="cofactor">
    <cofactor evidence="1">
        <name>Zn(2+)</name>
        <dbReference type="ChEBI" id="CHEBI:29105"/>
    </cofactor>
    <text evidence="1">Binds 1 zinc ion per subunit.</text>
</comment>
<comment type="pathway">
    <text evidence="3">Secondary metabolite biosynthesis.</text>
</comment>
<comment type="similarity">
    <text evidence="6">Belongs to the aldolase class II family.</text>
</comment>
<feature type="chain" id="PRO_0000437136" description="Decarboxylase tropJ">
    <location>
        <begin position="1"/>
        <end position="266"/>
    </location>
</feature>
<feature type="active site" description="Proton acceptor" evidence="1">
    <location>
        <position position="80"/>
    </location>
</feature>
<feature type="binding site" evidence="1">
    <location>
        <position position="80"/>
    </location>
    <ligand>
        <name>Zn(2+)</name>
        <dbReference type="ChEBI" id="CHEBI:29105"/>
    </ligand>
</feature>
<feature type="binding site" evidence="1">
    <location>
        <position position="99"/>
    </location>
    <ligand>
        <name>Zn(2+)</name>
        <dbReference type="ChEBI" id="CHEBI:29105"/>
    </ligand>
</feature>
<feature type="binding site" evidence="1">
    <location>
        <position position="101"/>
    </location>
    <ligand>
        <name>Zn(2+)</name>
        <dbReference type="ChEBI" id="CHEBI:29105"/>
    </ligand>
</feature>
<feature type="binding site" evidence="1">
    <location>
        <position position="180"/>
    </location>
    <ligand>
        <name>Zn(2+)</name>
        <dbReference type="ChEBI" id="CHEBI:29105"/>
    </ligand>
</feature>
<reference key="1">
    <citation type="journal article" date="2012" name="Proc. Natl. Acad. Sci. U.S.A.">
        <title>Genetic, molecular, and biochemical basis of fungal tropolone biosynthesis.</title>
        <authorList>
            <person name="Davison J."/>
            <person name="al Fahad A."/>
            <person name="Cai M."/>
            <person name="Song Z."/>
            <person name="Yehia S.Y."/>
            <person name="Lazarus C.M."/>
            <person name="Bailey A.M."/>
            <person name="Simpson T.J."/>
            <person name="Cox R.J."/>
        </authorList>
    </citation>
    <scope>NUCLEOTIDE SEQUENCE [GENOMIC DNA]</scope>
    <scope>FUNCTION</scope>
    <source>
        <strain>ATCC 10500 / CBS 375.48 / QM 6759 / NRRL 1006</strain>
    </source>
</reference>
<reference key="2">
    <citation type="journal article" date="2014" name="Angew. Chem. Int. Ed.">
        <title>The biosynthesis and catabolism of the maleic anhydride moiety of stipitatonic acid.</title>
        <authorList>
            <person name="al Fahad A."/>
            <person name="Abood A."/>
            <person name="Simpson T.J."/>
            <person name="Cox R.J."/>
        </authorList>
    </citation>
    <scope>NUCLEOTIDE SEQUENCE [GENOMIC DNA]</scope>
    <scope>FUNCTION</scope>
    <source>
        <strain>ATCC 10500 / CBS 375.48 / QM 6759 / NRRL 1006</strain>
    </source>
</reference>
<reference key="3">
    <citation type="journal article" date="2015" name="Genome Announc.">
        <title>Genome sequence of the AIDS-associated pathogen Penicillium marneffei (ATCC18224) and its near taxonomic relative Talaromyces stipitatus (ATCC10500).</title>
        <authorList>
            <person name="Nierman W.C."/>
            <person name="Fedorova-Abrams N.D."/>
            <person name="Andrianopoulos A."/>
        </authorList>
    </citation>
    <scope>NUCLEOTIDE SEQUENCE [LARGE SCALE GENOMIC DNA]</scope>
    <source>
        <strain>ATCC 10500 / CBS 375.48 / QM 6759 / NRRL 1006</strain>
    </source>
</reference>
<sequence>MNLPASIPVRTFISGCHILHRHHVLDAYGHLSVRNPERSDTFFMSRDLAPGLISSSVDLVEYFVHDASPVNPASPAGYIERFIHSEIYQKYPEVQSVVHSHASTVLPYTITGVNLRPCVHMSGFLGASVPNFDVAKFYKEDDKCDLLIRNKDLGAHLAECFSAPESDSESTRSVVLMRGHGFTAVGGSIPESVYRAIYTVENAKIQTVSMTLSAAAAKGDGPHSGIYFLPEHEIRGTKELTQRSVMRSWKLWVREVETGGLYTNLA</sequence>
<gene>
    <name evidence="5" type="primary">tropJ</name>
    <name evidence="4" type="synonym">tsL3</name>
    <name type="ORF">TSTA_117720</name>
</gene>
<evidence type="ECO:0000250" key="1">
    <source>
        <dbReference type="UniProtKB" id="P0AB87"/>
    </source>
</evidence>
<evidence type="ECO:0000269" key="2">
    <source>
    </source>
</evidence>
<evidence type="ECO:0000269" key="3">
    <source>
    </source>
</evidence>
<evidence type="ECO:0000303" key="4">
    <source>
    </source>
</evidence>
<evidence type="ECO:0000303" key="5">
    <source>
    </source>
</evidence>
<evidence type="ECO:0000305" key="6"/>
<organism>
    <name type="scientific">Talaromyces stipitatus (strain ATCC 10500 / CBS 375.48 / QM 6759 / NRRL 1006)</name>
    <name type="common">Penicillium stipitatum</name>
    <dbReference type="NCBI Taxonomy" id="441959"/>
    <lineage>
        <taxon>Eukaryota</taxon>
        <taxon>Fungi</taxon>
        <taxon>Dikarya</taxon>
        <taxon>Ascomycota</taxon>
        <taxon>Pezizomycotina</taxon>
        <taxon>Eurotiomycetes</taxon>
        <taxon>Eurotiomycetidae</taxon>
        <taxon>Eurotiales</taxon>
        <taxon>Trichocomaceae</taxon>
        <taxon>Talaromyces</taxon>
        <taxon>Talaromyces sect. Talaromyces</taxon>
    </lineage>
</organism>
<dbReference type="EC" id="1.-.-.-" evidence="2"/>
<dbReference type="EMBL" id="BK008910">
    <property type="protein sequence ID" value="DAA64702.1"/>
    <property type="molecule type" value="Genomic_DNA"/>
</dbReference>
<dbReference type="EMBL" id="EQ962655">
    <property type="protein sequence ID" value="EED17997.1"/>
    <property type="molecule type" value="Genomic_DNA"/>
</dbReference>
<dbReference type="RefSeq" id="XP_002481989.1">
    <property type="nucleotide sequence ID" value="XM_002481944.1"/>
</dbReference>
<dbReference type="SMR" id="B8M9J5"/>
<dbReference type="STRING" id="441959.B8M9J5"/>
<dbReference type="GeneID" id="8105830"/>
<dbReference type="VEuPathDB" id="FungiDB:TSTA_117720"/>
<dbReference type="eggNOG" id="ENOG502SKYK">
    <property type="taxonomic scope" value="Eukaryota"/>
</dbReference>
<dbReference type="HOGENOM" id="CLU_006033_2_2_1"/>
<dbReference type="InParanoid" id="B8M9J5"/>
<dbReference type="OMA" id="VTDFAYY"/>
<dbReference type="OrthoDB" id="2932980at2759"/>
<dbReference type="PhylomeDB" id="B8M9J5"/>
<dbReference type="Proteomes" id="UP000001745">
    <property type="component" value="Unassembled WGS sequence"/>
</dbReference>
<dbReference type="GO" id="GO:0005856">
    <property type="term" value="C:cytoskeleton"/>
    <property type="evidence" value="ECO:0007669"/>
    <property type="project" value="TreeGrafter"/>
</dbReference>
<dbReference type="GO" id="GO:0051015">
    <property type="term" value="F:actin filament binding"/>
    <property type="evidence" value="ECO:0007669"/>
    <property type="project" value="TreeGrafter"/>
</dbReference>
<dbReference type="GO" id="GO:0046872">
    <property type="term" value="F:metal ion binding"/>
    <property type="evidence" value="ECO:0007669"/>
    <property type="project" value="UniProtKB-KW"/>
</dbReference>
<dbReference type="GO" id="GO:0016491">
    <property type="term" value="F:oxidoreductase activity"/>
    <property type="evidence" value="ECO:0007669"/>
    <property type="project" value="UniProtKB-KW"/>
</dbReference>
<dbReference type="Gene3D" id="3.40.225.10">
    <property type="entry name" value="Class II aldolase/adducin N-terminal domain"/>
    <property type="match status" value="1"/>
</dbReference>
<dbReference type="InterPro" id="IPR051017">
    <property type="entry name" value="Aldolase-II_Adducin_sf"/>
</dbReference>
<dbReference type="InterPro" id="IPR001303">
    <property type="entry name" value="Aldolase_II/adducin_N"/>
</dbReference>
<dbReference type="InterPro" id="IPR036409">
    <property type="entry name" value="Aldolase_II/adducin_N_sf"/>
</dbReference>
<dbReference type="PANTHER" id="PTHR10672">
    <property type="entry name" value="ADDUCIN"/>
    <property type="match status" value="1"/>
</dbReference>
<dbReference type="PANTHER" id="PTHR10672:SF41">
    <property type="entry name" value="CLASS II ALDOLASE_ADDUCIN DOMAIN PROTEIN (AFU_ORTHOLOGUE AFUA_3G01330)"/>
    <property type="match status" value="1"/>
</dbReference>
<dbReference type="Pfam" id="PF00596">
    <property type="entry name" value="Aldolase_II"/>
    <property type="match status" value="1"/>
</dbReference>
<dbReference type="SMART" id="SM01007">
    <property type="entry name" value="Aldolase_II"/>
    <property type="match status" value="1"/>
</dbReference>
<dbReference type="SUPFAM" id="SSF53639">
    <property type="entry name" value="AraD/HMP-PK domain-like"/>
    <property type="match status" value="1"/>
</dbReference>
<name>TROPJ_TALSN</name>